<feature type="signal peptide">
    <location>
        <begin position="1"/>
        <end position="19"/>
    </location>
</feature>
<feature type="chain" id="PRO_0000015209" description="Ig heavy chain V region G4">
    <location>
        <begin position="20"/>
        <end position="117"/>
    </location>
</feature>
<feature type="region of interest" description="Framework-1">
    <location>
        <begin position="20"/>
        <end position="49"/>
    </location>
</feature>
<feature type="region of interest" description="Complementarity-determining-1">
    <location>
        <begin position="50"/>
        <end position="54"/>
    </location>
</feature>
<feature type="region of interest" description="Framework-2">
    <location>
        <begin position="55"/>
        <end position="68"/>
    </location>
</feature>
<feature type="region of interest" description="Complementarity-determining-2">
    <location>
        <begin position="69"/>
        <end position="85"/>
    </location>
</feature>
<feature type="region of interest" description="Framework-3">
    <location>
        <begin position="86"/>
        <end position="117"/>
    </location>
</feature>
<feature type="disulfide bond" evidence="1">
    <location>
        <begin position="41"/>
        <end position="115"/>
    </location>
</feature>
<feature type="non-terminal residue">
    <location>
        <position position="117"/>
    </location>
</feature>
<protein>
    <recommendedName>
        <fullName>Ig heavy chain V region G4</fullName>
    </recommendedName>
</protein>
<gene>
    <name type="primary">G4</name>
</gene>
<name>HV03_CAICR</name>
<reference key="1">
    <citation type="journal article" date="1985" name="Proc. Natl. Acad. Sci. U.S.A.">
        <title>Complete nucleotide sequences of three VH genes in Caiman, a phylogenetically ancient reptile: evolutionary diversification in coding segments and variation in the structure and organization of recombination elements.</title>
        <authorList>
            <person name="Litman G.W."/>
            <person name="Murphy K."/>
            <person name="Berger L."/>
            <person name="Litman R."/>
            <person name="Hinds K."/>
            <person name="Erickson B.W."/>
        </authorList>
    </citation>
    <scope>NUCLEOTIDE SEQUENCE [GENOMIC DNA]</scope>
</reference>
<proteinExistence type="predicted"/>
<keyword id="KW-1064">Adaptive immunity</keyword>
<keyword id="KW-1015">Disulfide bond</keyword>
<keyword id="KW-0391">Immunity</keyword>
<keyword id="KW-1280">Immunoglobulin</keyword>
<keyword id="KW-0732">Signal</keyword>
<sequence>MTHWLCFTLALVAVRGVLSEIQLVESGGAIRKPGDSLRLSCKASGFTFSDTWMAWARQPPGKGLQWVGEINGNSETIRYAPEVKGRLTISRDNTQNLLFLQISSLKPEDTATYYCAR</sequence>
<evidence type="ECO:0000255" key="1">
    <source>
        <dbReference type="PROSITE-ProRule" id="PRU00114"/>
    </source>
</evidence>
<accession>P03982</accession>
<organism>
    <name type="scientific">Caiman crocodilus</name>
    <name type="common">Spectacled caiman</name>
    <name type="synonym">Caiman sclerops</name>
    <dbReference type="NCBI Taxonomy" id="8499"/>
    <lineage>
        <taxon>Eukaryota</taxon>
        <taxon>Metazoa</taxon>
        <taxon>Chordata</taxon>
        <taxon>Craniata</taxon>
        <taxon>Vertebrata</taxon>
        <taxon>Euteleostomi</taxon>
        <taxon>Archelosauria</taxon>
        <taxon>Archosauria</taxon>
        <taxon>Crocodylia</taxon>
        <taxon>Alligatoridae</taxon>
        <taxon>Caimaninae</taxon>
        <taxon>Caiman</taxon>
    </lineage>
</organism>
<dbReference type="EMBL" id="M12770">
    <property type="protein sequence ID" value="AAA49194.1"/>
    <property type="molecule type" value="Genomic_DNA"/>
</dbReference>
<dbReference type="PIR" id="A02085">
    <property type="entry name" value="HVCQG4"/>
</dbReference>
<dbReference type="SMR" id="P03982"/>
<dbReference type="GO" id="GO:0005576">
    <property type="term" value="C:extracellular region"/>
    <property type="evidence" value="ECO:0007669"/>
    <property type="project" value="UniProtKB-ARBA"/>
</dbReference>
<dbReference type="GO" id="GO:0019814">
    <property type="term" value="C:immunoglobulin complex"/>
    <property type="evidence" value="ECO:0007669"/>
    <property type="project" value="UniProtKB-KW"/>
</dbReference>
<dbReference type="GO" id="GO:0002250">
    <property type="term" value="P:adaptive immune response"/>
    <property type="evidence" value="ECO:0007669"/>
    <property type="project" value="UniProtKB-KW"/>
</dbReference>
<dbReference type="FunFam" id="2.60.40.10:FF:001259">
    <property type="entry name" value="Immunoglobulin heavy variable 13-2"/>
    <property type="match status" value="1"/>
</dbReference>
<dbReference type="Gene3D" id="2.60.40.10">
    <property type="entry name" value="Immunoglobulins"/>
    <property type="match status" value="1"/>
</dbReference>
<dbReference type="InterPro" id="IPR007110">
    <property type="entry name" value="Ig-like_dom"/>
</dbReference>
<dbReference type="InterPro" id="IPR036179">
    <property type="entry name" value="Ig-like_dom_sf"/>
</dbReference>
<dbReference type="InterPro" id="IPR013783">
    <property type="entry name" value="Ig-like_fold"/>
</dbReference>
<dbReference type="InterPro" id="IPR013106">
    <property type="entry name" value="Ig_V-set"/>
</dbReference>
<dbReference type="InterPro" id="IPR050199">
    <property type="entry name" value="IgHV"/>
</dbReference>
<dbReference type="PANTHER" id="PTHR23266">
    <property type="entry name" value="IMMUNOGLOBULIN HEAVY CHAIN"/>
    <property type="match status" value="1"/>
</dbReference>
<dbReference type="Pfam" id="PF07686">
    <property type="entry name" value="V-set"/>
    <property type="match status" value="1"/>
</dbReference>
<dbReference type="SMART" id="SM00406">
    <property type="entry name" value="IGv"/>
    <property type="match status" value="1"/>
</dbReference>
<dbReference type="SUPFAM" id="SSF48726">
    <property type="entry name" value="Immunoglobulin"/>
    <property type="match status" value="1"/>
</dbReference>
<dbReference type="PROSITE" id="PS50835">
    <property type="entry name" value="IG_LIKE"/>
    <property type="match status" value="1"/>
</dbReference>